<dbReference type="EMBL" id="AE005673">
    <property type="protein sequence ID" value="AAK25715.1"/>
    <property type="molecule type" value="Genomic_DNA"/>
</dbReference>
<dbReference type="PIR" id="G87714">
    <property type="entry name" value="G87714"/>
</dbReference>
<dbReference type="RefSeq" id="NP_422547.1">
    <property type="nucleotide sequence ID" value="NC_002696.2"/>
</dbReference>
<dbReference type="RefSeq" id="WP_010921580.1">
    <property type="nucleotide sequence ID" value="NC_002696.2"/>
</dbReference>
<dbReference type="SMR" id="P0CAV7"/>
<dbReference type="STRING" id="190650.CC_3753"/>
<dbReference type="EnsemblBacteria" id="AAK25715">
    <property type="protein sequence ID" value="AAK25715"/>
    <property type="gene ID" value="CC_3753"/>
</dbReference>
<dbReference type="KEGG" id="ccr:CC_3753"/>
<dbReference type="PATRIC" id="fig|190650.5.peg.3755"/>
<dbReference type="eggNOG" id="COG1192">
    <property type="taxonomic scope" value="Bacteria"/>
</dbReference>
<dbReference type="HOGENOM" id="CLU_037612_1_4_5"/>
<dbReference type="BioCyc" id="CAULO:CC3753-MONOMER"/>
<dbReference type="Proteomes" id="UP000001816">
    <property type="component" value="Chromosome"/>
</dbReference>
<dbReference type="GO" id="GO:0005524">
    <property type="term" value="F:ATP binding"/>
    <property type="evidence" value="ECO:0007669"/>
    <property type="project" value="UniProtKB-KW"/>
</dbReference>
<dbReference type="GO" id="GO:0007059">
    <property type="term" value="P:chromosome segregation"/>
    <property type="evidence" value="ECO:0007669"/>
    <property type="project" value="UniProtKB-KW"/>
</dbReference>
<dbReference type="CDD" id="cd02042">
    <property type="entry name" value="ParAB_family"/>
    <property type="match status" value="1"/>
</dbReference>
<dbReference type="FunFam" id="3.40.50.300:FF:000285">
    <property type="entry name" value="Sporulation initiation inhibitor Soj"/>
    <property type="match status" value="1"/>
</dbReference>
<dbReference type="Gene3D" id="3.40.50.300">
    <property type="entry name" value="P-loop containing nucleotide triphosphate hydrolases"/>
    <property type="match status" value="1"/>
</dbReference>
<dbReference type="InterPro" id="IPR025669">
    <property type="entry name" value="AAA_dom"/>
</dbReference>
<dbReference type="InterPro" id="IPR050678">
    <property type="entry name" value="DNA_Partitioning_ATPase"/>
</dbReference>
<dbReference type="InterPro" id="IPR027417">
    <property type="entry name" value="P-loop_NTPase"/>
</dbReference>
<dbReference type="PANTHER" id="PTHR13696">
    <property type="entry name" value="P-LOOP CONTAINING NUCLEOSIDE TRIPHOSPHATE HYDROLASE"/>
    <property type="match status" value="1"/>
</dbReference>
<dbReference type="PANTHER" id="PTHR13696:SF52">
    <property type="entry name" value="PARA FAMILY PROTEIN CT_582"/>
    <property type="match status" value="1"/>
</dbReference>
<dbReference type="Pfam" id="PF13614">
    <property type="entry name" value="AAA_31"/>
    <property type="match status" value="1"/>
</dbReference>
<dbReference type="PIRSF" id="PIRSF009320">
    <property type="entry name" value="Nuc_binding_HP_1000"/>
    <property type="match status" value="1"/>
</dbReference>
<dbReference type="SUPFAM" id="SSF52540">
    <property type="entry name" value="P-loop containing nucleoside triphosphate hydrolases"/>
    <property type="match status" value="1"/>
</dbReference>
<keyword id="KW-0067">ATP-binding</keyword>
<keyword id="KW-0159">Chromosome partition</keyword>
<keyword id="KW-0547">Nucleotide-binding</keyword>
<keyword id="KW-1185">Reference proteome</keyword>
<organism>
    <name type="scientific">Caulobacter vibrioides (strain ATCC 19089 / CIP 103742 / CB 15)</name>
    <name type="common">Caulobacter crescentus</name>
    <dbReference type="NCBI Taxonomy" id="190650"/>
    <lineage>
        <taxon>Bacteria</taxon>
        <taxon>Pseudomonadati</taxon>
        <taxon>Pseudomonadota</taxon>
        <taxon>Alphaproteobacteria</taxon>
        <taxon>Caulobacterales</taxon>
        <taxon>Caulobacteraceae</taxon>
        <taxon>Caulobacter</taxon>
    </lineage>
</organism>
<feature type="chain" id="PRO_0000201979" description="Chromosome partitioning protein ParA">
    <location>
        <begin position="1"/>
        <end position="267"/>
    </location>
</feature>
<feature type="binding site" evidence="2">
    <location>
        <begin position="14"/>
        <end position="21"/>
    </location>
    <ligand>
        <name>ATP</name>
        <dbReference type="ChEBI" id="CHEBI:30616"/>
    </ligand>
</feature>
<name>PARA_CAUVC</name>
<comment type="function">
    <text evidence="1">Involved in chromosome partition. Localize to both poles of the predivisional cell following completion of DNA replication (By similarity).</text>
</comment>
<comment type="similarity">
    <text evidence="3">Belongs to the ParA family.</text>
</comment>
<gene>
    <name type="primary">parA</name>
    <name type="ordered locus">CC_3753</name>
</gene>
<sequence>MSANPLRVLAIANQKGGVGKTTTAINLGTALAACGERVLLIDADPQGNCSTGLGIGRTQRRTTLYDVLMGEAPVVDAAVKTELPGLDVIPADADLSGVEIELGQTARRSYRLRDALEAIRANGPYTYVLIDCPPSLNVLTVNAMTAADAVFVPLQCEFFALEGLTQLMRTIERVRGSLNPRLEIQGVVLTMYDRRNSLSEQVAKDVRAHFGDKVYDAVIPRNVRVSEAPSFGKPVLLYDLKCAGSQAYLKLAREVISRERDRQAKAA</sequence>
<accession>P0CAV7</accession>
<accession>O05189</accession>
<protein>
    <recommendedName>
        <fullName>Chromosome partitioning protein ParA</fullName>
    </recommendedName>
</protein>
<proteinExistence type="inferred from homology"/>
<evidence type="ECO:0000250" key="1"/>
<evidence type="ECO:0000255" key="2"/>
<evidence type="ECO:0000305" key="3"/>
<reference key="1">
    <citation type="journal article" date="2001" name="Proc. Natl. Acad. Sci. U.S.A.">
        <title>Complete genome sequence of Caulobacter crescentus.</title>
        <authorList>
            <person name="Nierman W.C."/>
            <person name="Feldblyum T.V."/>
            <person name="Laub M.T."/>
            <person name="Paulsen I.T."/>
            <person name="Nelson K.E."/>
            <person name="Eisen J.A."/>
            <person name="Heidelberg J.F."/>
            <person name="Alley M.R.K."/>
            <person name="Ohta N."/>
            <person name="Maddock J.R."/>
            <person name="Potocka I."/>
            <person name="Nelson W.C."/>
            <person name="Newton A."/>
            <person name="Stephens C."/>
            <person name="Phadke N.D."/>
            <person name="Ely B."/>
            <person name="DeBoy R.T."/>
            <person name="Dodson R.J."/>
            <person name="Durkin A.S."/>
            <person name="Gwinn M.L."/>
            <person name="Haft D.H."/>
            <person name="Kolonay J.F."/>
            <person name="Smit J."/>
            <person name="Craven M.B."/>
            <person name="Khouri H.M."/>
            <person name="Shetty J."/>
            <person name="Berry K.J."/>
            <person name="Utterback T.R."/>
            <person name="Tran K."/>
            <person name="Wolf A.M."/>
            <person name="Vamathevan J.J."/>
            <person name="Ermolaeva M.D."/>
            <person name="White O."/>
            <person name="Salzberg S.L."/>
            <person name="Venter J.C."/>
            <person name="Shapiro L."/>
            <person name="Fraser C.M."/>
        </authorList>
    </citation>
    <scope>NUCLEOTIDE SEQUENCE [LARGE SCALE GENOMIC DNA]</scope>
    <source>
        <strain>ATCC 19089 / CIP 103742 / CB 15</strain>
    </source>
</reference>